<reference key="1">
    <citation type="journal article" date="2004" name="Nature">
        <title>Genome evolution in yeasts.</title>
        <authorList>
            <person name="Dujon B."/>
            <person name="Sherman D."/>
            <person name="Fischer G."/>
            <person name="Durrens P."/>
            <person name="Casaregola S."/>
            <person name="Lafontaine I."/>
            <person name="de Montigny J."/>
            <person name="Marck C."/>
            <person name="Neuveglise C."/>
            <person name="Talla E."/>
            <person name="Goffard N."/>
            <person name="Frangeul L."/>
            <person name="Aigle M."/>
            <person name="Anthouard V."/>
            <person name="Babour A."/>
            <person name="Barbe V."/>
            <person name="Barnay S."/>
            <person name="Blanchin S."/>
            <person name="Beckerich J.-M."/>
            <person name="Beyne E."/>
            <person name="Bleykasten C."/>
            <person name="Boisrame A."/>
            <person name="Boyer J."/>
            <person name="Cattolico L."/>
            <person name="Confanioleri F."/>
            <person name="de Daruvar A."/>
            <person name="Despons L."/>
            <person name="Fabre E."/>
            <person name="Fairhead C."/>
            <person name="Ferry-Dumazet H."/>
            <person name="Groppi A."/>
            <person name="Hantraye F."/>
            <person name="Hennequin C."/>
            <person name="Jauniaux N."/>
            <person name="Joyet P."/>
            <person name="Kachouri R."/>
            <person name="Kerrest A."/>
            <person name="Koszul R."/>
            <person name="Lemaire M."/>
            <person name="Lesur I."/>
            <person name="Ma L."/>
            <person name="Muller H."/>
            <person name="Nicaud J.-M."/>
            <person name="Nikolski M."/>
            <person name="Oztas S."/>
            <person name="Ozier-Kalogeropoulos O."/>
            <person name="Pellenz S."/>
            <person name="Potier S."/>
            <person name="Richard G.-F."/>
            <person name="Straub M.-L."/>
            <person name="Suleau A."/>
            <person name="Swennen D."/>
            <person name="Tekaia F."/>
            <person name="Wesolowski-Louvel M."/>
            <person name="Westhof E."/>
            <person name="Wirth B."/>
            <person name="Zeniou-Meyer M."/>
            <person name="Zivanovic Y."/>
            <person name="Bolotin-Fukuhara M."/>
            <person name="Thierry A."/>
            <person name="Bouchier C."/>
            <person name="Caudron B."/>
            <person name="Scarpelli C."/>
            <person name="Gaillardin C."/>
            <person name="Weissenbach J."/>
            <person name="Wincker P."/>
            <person name="Souciet J.-L."/>
        </authorList>
    </citation>
    <scope>NUCLEOTIDE SEQUENCE [LARGE SCALE GENOMIC DNA]</scope>
    <source>
        <strain>ATCC 36239 / CBS 767 / BCRC 21394 / JCM 1990 / NBRC 0083 / IGC 2968</strain>
    </source>
</reference>
<accession>Q6BM18</accession>
<comment type="function">
    <text evidence="1">Effector of VPS34 phosphatidylinositol 3-phosphate kinase signaling. Regulates the cytoplasm to vacuole transport (Cvt) vesicle formation. Plays a role in ATG protein retrieval from the pre-autophagosomal structure (PAS) and is especially required for autophagy-dependent cycling of ATG9 (By similarity).</text>
</comment>
<comment type="subcellular location">
    <subcellularLocation>
        <location evidence="1">Cytoplasmic vesicle membrane</location>
        <topology evidence="1">Single-pass type I membrane protein</topology>
    </subcellularLocation>
    <subcellularLocation>
        <location evidence="1">Golgi apparatus membrane</location>
        <topology evidence="1">Single-pass type I membrane protein</topology>
    </subcellularLocation>
    <subcellularLocation>
        <location evidence="1">Mitochondrion membrane</location>
        <topology evidence="1">Single-pass membrane protein</topology>
    </subcellularLocation>
    <subcellularLocation>
        <location evidence="1">Preautophagosomal structure membrane</location>
        <topology evidence="1">Single-pass type I membrane protein</topology>
    </subcellularLocation>
    <text evidence="1">Cycles among the pre-autophagosomal structure (PAS), mitochondria and Golgi.</text>
</comment>
<comment type="similarity">
    <text evidence="4">Belongs to the ATG27 family.</text>
</comment>
<sequence length="282" mass="31673">MNYIYLISAALGLIGGVSGIDCGVKELKEYDFESIKGIHSVTTLKDTPPTQTNVTWYIGICDTISEKIDHCPKNSDLCGITSINLEKNSNKDAVVSEIVGFNTNLQKQYKPFTKDGDNNEDGITIVYKGANWGDNLVDAELRFVCASSSDKDKDLDKFQLHQWDDKRLKVSVKTKAACITDKKDKKKPDNKKDNKKGNDKDDNGESWGWFTWIFIFLVLFLSIYIVGGAWFQYSKGNAIDFQSALREVLENFVSLLKGLPSFVREIIEKFTGNSNRGEYSAV</sequence>
<evidence type="ECO:0000250" key="1"/>
<evidence type="ECO:0000255" key="2"/>
<evidence type="ECO:0000255" key="3">
    <source>
        <dbReference type="PROSITE-ProRule" id="PRU01262"/>
    </source>
</evidence>
<evidence type="ECO:0000305" key="4"/>
<protein>
    <recommendedName>
        <fullName>Autophagy-related protein 27</fullName>
    </recommendedName>
</protein>
<name>ATG27_DEBHA</name>
<feature type="signal peptide" evidence="2">
    <location>
        <begin position="1"/>
        <end position="19"/>
    </location>
</feature>
<feature type="chain" id="PRO_0000001777" description="Autophagy-related protein 27">
    <location>
        <begin position="20"/>
        <end position="282"/>
    </location>
</feature>
<feature type="topological domain" description="Lumenal" evidence="2">
    <location>
        <begin position="20"/>
        <end position="206"/>
    </location>
</feature>
<feature type="transmembrane region" description="Helical" evidence="2">
    <location>
        <begin position="207"/>
        <end position="227"/>
    </location>
</feature>
<feature type="topological domain" description="Cytoplasmic" evidence="2">
    <location>
        <begin position="228"/>
        <end position="282"/>
    </location>
</feature>
<feature type="domain" description="MRH" evidence="3">
    <location>
        <begin position="20"/>
        <end position="180"/>
    </location>
</feature>
<feature type="glycosylation site" description="N-linked (GlcNAc...) asparagine" evidence="2">
    <location>
        <position position="53"/>
    </location>
</feature>
<feature type="disulfide bond" evidence="3">
    <location>
        <begin position="22"/>
        <end position="61"/>
    </location>
</feature>
<feature type="disulfide bond" evidence="3">
    <location>
        <begin position="71"/>
        <end position="78"/>
    </location>
</feature>
<feature type="disulfide bond" evidence="3">
    <location>
        <begin position="145"/>
        <end position="178"/>
    </location>
</feature>
<organism>
    <name type="scientific">Debaryomyces hansenii (strain ATCC 36239 / CBS 767 / BCRC 21394 / JCM 1990 / NBRC 0083 / IGC 2968)</name>
    <name type="common">Yeast</name>
    <name type="synonym">Torulaspora hansenii</name>
    <dbReference type="NCBI Taxonomy" id="284592"/>
    <lineage>
        <taxon>Eukaryota</taxon>
        <taxon>Fungi</taxon>
        <taxon>Dikarya</taxon>
        <taxon>Ascomycota</taxon>
        <taxon>Saccharomycotina</taxon>
        <taxon>Pichiomycetes</taxon>
        <taxon>Debaryomycetaceae</taxon>
        <taxon>Debaryomyces</taxon>
    </lineage>
</organism>
<proteinExistence type="inferred from homology"/>
<dbReference type="EMBL" id="CR382138">
    <property type="protein sequence ID" value="CAG89094.2"/>
    <property type="molecule type" value="Genomic_DNA"/>
</dbReference>
<dbReference type="RefSeq" id="XP_460753.2">
    <property type="nucleotide sequence ID" value="XM_460753.1"/>
</dbReference>
<dbReference type="FunCoup" id="Q6BM18">
    <property type="interactions" value="83"/>
</dbReference>
<dbReference type="STRING" id="284592.Q6BM18"/>
<dbReference type="GlyCosmos" id="Q6BM18">
    <property type="glycosylation" value="1 site, No reported glycans"/>
</dbReference>
<dbReference type="GeneID" id="2903769"/>
<dbReference type="KEGG" id="dha:DEHA2F08998g"/>
<dbReference type="VEuPathDB" id="FungiDB:DEHA2F08998g"/>
<dbReference type="eggNOG" id="ENOG502QVJJ">
    <property type="taxonomic scope" value="Eukaryota"/>
</dbReference>
<dbReference type="HOGENOM" id="CLU_089705_0_0_1"/>
<dbReference type="InParanoid" id="Q6BM18"/>
<dbReference type="OMA" id="NKGNAID"/>
<dbReference type="OrthoDB" id="29460at2759"/>
<dbReference type="Proteomes" id="UP000000599">
    <property type="component" value="Chromosome F"/>
</dbReference>
<dbReference type="GO" id="GO:0030659">
    <property type="term" value="C:cytoplasmic vesicle membrane"/>
    <property type="evidence" value="ECO:0007669"/>
    <property type="project" value="UniProtKB-SubCell"/>
</dbReference>
<dbReference type="GO" id="GO:0000139">
    <property type="term" value="C:Golgi membrane"/>
    <property type="evidence" value="ECO:0007669"/>
    <property type="project" value="UniProtKB-SubCell"/>
</dbReference>
<dbReference type="GO" id="GO:0031966">
    <property type="term" value="C:mitochondrial membrane"/>
    <property type="evidence" value="ECO:0007669"/>
    <property type="project" value="UniProtKB-SubCell"/>
</dbReference>
<dbReference type="GO" id="GO:0034045">
    <property type="term" value="C:phagophore assembly site membrane"/>
    <property type="evidence" value="ECO:0007669"/>
    <property type="project" value="UniProtKB-SubCell"/>
</dbReference>
<dbReference type="GO" id="GO:0006914">
    <property type="term" value="P:autophagy"/>
    <property type="evidence" value="ECO:0007669"/>
    <property type="project" value="UniProtKB-KW"/>
</dbReference>
<dbReference type="GO" id="GO:0015031">
    <property type="term" value="P:protein transport"/>
    <property type="evidence" value="ECO:0007669"/>
    <property type="project" value="UniProtKB-KW"/>
</dbReference>
<dbReference type="Gene3D" id="2.70.130.10">
    <property type="entry name" value="Mannose-6-phosphate receptor binding domain"/>
    <property type="match status" value="1"/>
</dbReference>
<dbReference type="InterPro" id="IPR018939">
    <property type="entry name" value="Autophagy-rel_prot_27"/>
</dbReference>
<dbReference type="InterPro" id="IPR009011">
    <property type="entry name" value="Man6P_isomerase_rcpt-bd_dom_sf"/>
</dbReference>
<dbReference type="InterPro" id="IPR044865">
    <property type="entry name" value="MRH_dom"/>
</dbReference>
<dbReference type="PANTHER" id="PTHR15071:SF13">
    <property type="entry name" value="AUTOPHAGY-RELATED PROTEIN 27"/>
    <property type="match status" value="1"/>
</dbReference>
<dbReference type="PANTHER" id="PTHR15071">
    <property type="entry name" value="MANNOSE-6-PHOSPHATE RECEPTOR FAMILY MEMBER"/>
    <property type="match status" value="1"/>
</dbReference>
<dbReference type="Pfam" id="PF09451">
    <property type="entry name" value="ATG27"/>
    <property type="match status" value="1"/>
</dbReference>
<dbReference type="SUPFAM" id="SSF50911">
    <property type="entry name" value="Mannose 6-phosphate receptor domain"/>
    <property type="match status" value="1"/>
</dbReference>
<dbReference type="PROSITE" id="PS51914">
    <property type="entry name" value="MRH"/>
    <property type="match status" value="1"/>
</dbReference>
<gene>
    <name type="primary">ATG27</name>
    <name type="ordered locus">DEHA2F08998g</name>
</gene>
<keyword id="KW-0072">Autophagy</keyword>
<keyword id="KW-0968">Cytoplasmic vesicle</keyword>
<keyword id="KW-1015">Disulfide bond</keyword>
<keyword id="KW-0325">Glycoprotein</keyword>
<keyword id="KW-0333">Golgi apparatus</keyword>
<keyword id="KW-0472">Membrane</keyword>
<keyword id="KW-0496">Mitochondrion</keyword>
<keyword id="KW-0653">Protein transport</keyword>
<keyword id="KW-1185">Reference proteome</keyword>
<keyword id="KW-0732">Signal</keyword>
<keyword id="KW-0812">Transmembrane</keyword>
<keyword id="KW-1133">Transmembrane helix</keyword>
<keyword id="KW-0813">Transport</keyword>